<organism>
    <name type="scientific">Blochmanniella pennsylvanica (strain BPEN)</name>
    <dbReference type="NCBI Taxonomy" id="291272"/>
    <lineage>
        <taxon>Bacteria</taxon>
        <taxon>Pseudomonadati</taxon>
        <taxon>Pseudomonadota</taxon>
        <taxon>Gammaproteobacteria</taxon>
        <taxon>Enterobacterales</taxon>
        <taxon>Enterobacteriaceae</taxon>
        <taxon>ant endosymbionts</taxon>
        <taxon>Candidatus Blochmanniella</taxon>
    </lineage>
</organism>
<dbReference type="EMBL" id="CP000016">
    <property type="protein sequence ID" value="AAZ40818.1"/>
    <property type="molecule type" value="Genomic_DNA"/>
</dbReference>
<dbReference type="RefSeq" id="WP_011282725.1">
    <property type="nucleotide sequence ID" value="NC_007292.1"/>
</dbReference>
<dbReference type="SMR" id="Q493M2"/>
<dbReference type="STRING" id="291272.BPEN_180"/>
<dbReference type="KEGG" id="bpn:BPEN_180"/>
<dbReference type="eggNOG" id="COG0806">
    <property type="taxonomic scope" value="Bacteria"/>
</dbReference>
<dbReference type="HOGENOM" id="CLU_077636_1_0_6"/>
<dbReference type="OrthoDB" id="9783509at2"/>
<dbReference type="Proteomes" id="UP000007794">
    <property type="component" value="Chromosome"/>
</dbReference>
<dbReference type="GO" id="GO:0005737">
    <property type="term" value="C:cytoplasm"/>
    <property type="evidence" value="ECO:0007669"/>
    <property type="project" value="UniProtKB-SubCell"/>
</dbReference>
<dbReference type="GO" id="GO:0005840">
    <property type="term" value="C:ribosome"/>
    <property type="evidence" value="ECO:0007669"/>
    <property type="project" value="InterPro"/>
</dbReference>
<dbReference type="GO" id="GO:0043022">
    <property type="term" value="F:ribosome binding"/>
    <property type="evidence" value="ECO:0007669"/>
    <property type="project" value="InterPro"/>
</dbReference>
<dbReference type="GO" id="GO:0042274">
    <property type="term" value="P:ribosomal small subunit biogenesis"/>
    <property type="evidence" value="ECO:0007669"/>
    <property type="project" value="UniProtKB-UniRule"/>
</dbReference>
<dbReference type="GO" id="GO:0006364">
    <property type="term" value="P:rRNA processing"/>
    <property type="evidence" value="ECO:0007669"/>
    <property type="project" value="UniProtKB-UniRule"/>
</dbReference>
<dbReference type="Gene3D" id="2.30.30.240">
    <property type="entry name" value="PRC-barrel domain"/>
    <property type="match status" value="1"/>
</dbReference>
<dbReference type="Gene3D" id="2.40.30.60">
    <property type="entry name" value="RimM"/>
    <property type="match status" value="1"/>
</dbReference>
<dbReference type="HAMAP" id="MF_00014">
    <property type="entry name" value="Ribosome_mat_RimM"/>
    <property type="match status" value="1"/>
</dbReference>
<dbReference type="InterPro" id="IPR011033">
    <property type="entry name" value="PRC_barrel-like_sf"/>
</dbReference>
<dbReference type="InterPro" id="IPR056792">
    <property type="entry name" value="PRC_RimM"/>
</dbReference>
<dbReference type="InterPro" id="IPR011961">
    <property type="entry name" value="RimM"/>
</dbReference>
<dbReference type="InterPro" id="IPR002676">
    <property type="entry name" value="RimM_N"/>
</dbReference>
<dbReference type="InterPro" id="IPR036976">
    <property type="entry name" value="RimM_N_sf"/>
</dbReference>
<dbReference type="InterPro" id="IPR009000">
    <property type="entry name" value="Transl_B-barrel_sf"/>
</dbReference>
<dbReference type="NCBIfam" id="TIGR02273">
    <property type="entry name" value="16S_RimM"/>
    <property type="match status" value="1"/>
</dbReference>
<dbReference type="PANTHER" id="PTHR33692">
    <property type="entry name" value="RIBOSOME MATURATION FACTOR RIMM"/>
    <property type="match status" value="1"/>
</dbReference>
<dbReference type="PANTHER" id="PTHR33692:SF1">
    <property type="entry name" value="RIBOSOME MATURATION FACTOR RIMM"/>
    <property type="match status" value="1"/>
</dbReference>
<dbReference type="Pfam" id="PF24986">
    <property type="entry name" value="PRC_RimM"/>
    <property type="match status" value="1"/>
</dbReference>
<dbReference type="Pfam" id="PF01782">
    <property type="entry name" value="RimM"/>
    <property type="match status" value="1"/>
</dbReference>
<dbReference type="SUPFAM" id="SSF50346">
    <property type="entry name" value="PRC-barrel domain"/>
    <property type="match status" value="1"/>
</dbReference>
<dbReference type="SUPFAM" id="SSF50447">
    <property type="entry name" value="Translation proteins"/>
    <property type="match status" value="1"/>
</dbReference>
<gene>
    <name evidence="1" type="primary">rimM</name>
    <name type="ordered locus">BPEN_180</name>
</gene>
<accession>Q493M2</accession>
<name>RIMM_BLOPB</name>
<comment type="function">
    <text evidence="1">An accessory protein needed during the final step in the assembly of 30S ribosomal subunit, possibly for assembly of the head region. Essential for efficient processing of 16S rRNA. May be needed both before and after RbfA during the maturation of 16S rRNA. It has affinity for free ribosomal 30S subunits but not for 70S ribosomes.</text>
</comment>
<comment type="subunit">
    <text evidence="1">Binds ribosomal protein uS19.</text>
</comment>
<comment type="subcellular location">
    <subcellularLocation>
        <location evidence="1">Cytoplasm</location>
    </subcellularLocation>
</comment>
<comment type="domain">
    <text evidence="1">The PRC barrel domain binds ribosomal protein uS19.</text>
</comment>
<comment type="similarity">
    <text evidence="1">Belongs to the RimM family.</text>
</comment>
<reference key="1">
    <citation type="journal article" date="2005" name="Genome Res.">
        <title>Genome sequence of Blochmannia pennsylvanicus indicates parallel evolutionary trends among bacterial mutualists of insects.</title>
        <authorList>
            <person name="Degnan P.H."/>
            <person name="Lazarus A.B."/>
            <person name="Wernegreen J.J."/>
        </authorList>
    </citation>
    <scope>NUCLEOTIDE SEQUENCE [LARGE SCALE GENOMIC DNA]</scope>
    <source>
        <strain>BPEN</strain>
    </source>
</reference>
<keyword id="KW-0143">Chaperone</keyword>
<keyword id="KW-0963">Cytoplasm</keyword>
<keyword id="KW-1185">Reference proteome</keyword>
<keyword id="KW-0690">Ribosome biogenesis</keyword>
<keyword id="KW-0698">rRNA processing</keyword>
<sequence>MKHDEYSINKEDVMIPPLHPVVIGRIIGAYGILGWVRILSFTEKNDNIFYYSPYFIIVQSTWKEIFLDKWKLIGKRYIVKIRGVSNRNSAQSLSRCNIIIDETQFPCINDDEYYWKDLIGCVVITVQGVLLGDIISIIETTANDVLVVKMCQNNLYKIKNCLIPFLIKRVIKNINLVTRTVTVDWDPNF</sequence>
<feature type="chain" id="PRO_0000244112" description="Ribosome maturation factor RimM">
    <location>
        <begin position="1"/>
        <end position="189"/>
    </location>
</feature>
<feature type="domain" description="PRC barrel" evidence="1">
    <location>
        <begin position="110"/>
        <end position="189"/>
    </location>
</feature>
<evidence type="ECO:0000255" key="1">
    <source>
        <dbReference type="HAMAP-Rule" id="MF_00014"/>
    </source>
</evidence>
<protein>
    <recommendedName>
        <fullName evidence="1">Ribosome maturation factor RimM</fullName>
    </recommendedName>
</protein>
<proteinExistence type="inferred from homology"/>